<comment type="function">
    <molecule>Capsid protein VP1</molecule>
    <text evidence="2">Forms an icosahedral capsid of pseudo T=3 symmetry with capsid proteins VP2 and VP3 (By similarity). The capsid is 300 Angstroms in diameter, composed of 60 copies of each capsid protein and enclosing the viral positive strand RNA genome (By similarity). Capsid protein VP1 mainly forms the vertices of the capsid (By similarity). Capsid protein VP1 interacts with host cell receptor to provide virion attachment to target host cells. This attachment induces virion internalization (By similarity). After binding to its receptor, the capsid undergoes conformational changes (By similarity). Capsid protein VP1 N-terminus (that contains an amphipathic alpha-helix) and capsid protein VP4 are externalized (By similarity). Together, they shape a pore in the host membrane through which viral genome is translocated to host cell cytoplasm (By similarity).</text>
</comment>
<comment type="function">
    <molecule>Capsid protein VP2</molecule>
    <text evidence="2">Forms an icosahedral capsid of pseudo T=3 symmetry with capsid proteins VP2 and VP3 (By similarity). The capsid is 300 Angstroms in diameter, composed of 60 copies of each capsid protein and enclosing the viral positive strand RNA genome (By similarity).</text>
</comment>
<comment type="function">
    <molecule>Capsid protein VP3</molecule>
    <text evidence="2">Forms an icosahedral capsid of pseudo T=3 symmetry with capsid proteins VP2 and VP3 (By similarity). The capsid is 300 Angstroms in diameter, composed of 60 copies of each capsid protein and enclosing the viral positive strand RNA genome (By similarity).</text>
</comment>
<comment type="function">
    <molecule>Capsid protein VP4</molecule>
    <text evidence="2">Lies on the inner surface of the capsid shell (By similarity). After binding to the host receptor, the capsid undergoes conformational changes (By similarity). Capsid protein VP4 is released, Capsid protein VP1 N-terminus is externalized, and together, they shape a pore in the host membrane through which the viral genome is translocated into the host cell cytoplasm (By similarity).</text>
</comment>
<comment type="function">
    <molecule>Capsid protein VP0</molecule>
    <text evidence="2">Component of immature procapsids, which is cleaved into capsid proteins VP4 and VP2 after maturation (By similarity). Allows the capsid to remain inactive before the maturation step (By similarity).</text>
</comment>
<comment type="function">
    <molecule>Protease 2A</molecule>
    <text evidence="2 3 5">Cysteine protease that cleaves viral polyprotein and specific host proteins (By similarity). It is responsible for the autocatalytic cleavage between the P1 and P2 regions, which is the first cleavage occurring in the polyprotein (By similarity). Also cleaves the host translation initiation factor EIF4G1, in order to shut down the capped cellular mRNA translation (By similarity). Inhibits the host nucleus-cytoplasm protein and RNA trafficking by cleaving host members of the nuclear pores (By similarity). Counteracts stress granule formation probably by antagonizing its assembly or promoting its dissassembly (By similarity). Cleaves and inhibits host IFIH1/MDA5, thereby inhibiting the type-I IFN production and the establishment of the antiviral state (By similarity). Cleaves and inhibits host MAVS, thereby inhibiting the type-I IFN production and the establishment of the antiviral state (By similarity).</text>
</comment>
<comment type="function">
    <molecule>Protein 2B</molecule>
    <text evidence="2">Plays an essential role in the virus replication cycle by acting as a viroporin. Creates a pore in the host endoplasmic reticulum and as a consequence releases Ca2+ in the cytoplasm of infected cell. In turn, high levels of cytoplasmic calcium may trigger membrane trafficking and transport of viral ER-associated proteins to viroplasms, sites of viral genome replication.</text>
</comment>
<comment type="function">
    <molecule>Protein 2C</molecule>
    <text evidence="2">Induces and associates with structural rearrangements of intracellular membranes. Displays RNA-binding, nucleotide binding and NTPase activities. May play a role in virion morphogenesis and viral RNA encapsidation by interacting with the capsid protein VP3.</text>
</comment>
<comment type="function">
    <molecule>Protein 3AB</molecule>
    <text evidence="2">Localizes the viral replication complex to the surface of membranous vesicles. Together with protein 3CD binds the Cis-Active RNA Element (CRE) which is involved in RNA synthesis initiation. Acts as a cofactor to stimulate the activity of 3D polymerase, maybe through a nucleid acid chaperone activity.</text>
</comment>
<comment type="function">
    <molecule>Protein 3A</molecule>
    <text evidence="2">Localizes the viral replication complex to the surface of membranous vesicles (By similarity). It inhibits host cell endoplasmic reticulum-to-Golgi apparatus transport and causes the disassembly of the Golgi complex, possibly through GBF1 interaction (By similarity). This would result in depletion of MHC, trail receptors and IFN receptors at the host cell surface (By similarity). Plays an essential role in viral RNA replication by recruiting ACBD3 and PI4KB at the viral replication sites, thereby allowing the formation of the rearranged membranous structures where viral replication takes place (By similarity).</text>
</comment>
<comment type="function">
    <molecule>Viral protein genome-linked</molecule>
    <text evidence="2">Acts as a primer for viral RNA replication and remains covalently bound to viral genomic RNA. VPg is uridylylated prior to priming replication into VPg-pUpU. The oriI viral genomic sequence may act as a template for this. The VPg-pUpU is then used as primer on the genomic RNA poly(A) by the RNA-dependent RNA polymerase to replicate the viral genome. During genome replication, the VPg-RNA linkage is removed by the host TDP2, thereby accelerating replication. During the late stage of the replication cycle, host TDP2 is excluded from sites of viral RNA synthesis and encapsidation, allowing for the generation of progeny virions.</text>
</comment>
<comment type="function">
    <molecule>Protein 3CD</molecule>
    <text evidence="2">Involved in the viral replication complex and viral polypeptide maturation. It exhibits protease activity with a specificity and catalytic efficiency that is different from protease 3C. Protein 3CD lacks polymerase activity. Protein 3CD binds to the 5'UTR of the viral genome.</text>
</comment>
<comment type="function">
    <molecule>Protease 3C</molecule>
    <text evidence="2 4 14">Major viral protease that mediates proteolytic processing of the polyprotein (By similarity). Cleaves host EIF5B, contributing to host translation shutoff (By similarity). Also cleaves host PABPC1, contributing to host translation shutoff (By similarity). Binds and inhibits host IFIH1/MDA5, thereby inhibiting the type-I IFN production and the establishment of the antiviral state (PubMed:28424289). Cleaves host MAP3K7/TAK1, resulting in inhibition of TRAF6-triggered NF-kappa-B induction (PubMed:28424289). Cleaves host NLRP1, triggers host N-glycine-mediated degradation of the autoinhibitory NLRP1 N-terminal fragment (By similarity).</text>
</comment>
<comment type="function">
    <molecule>RNA-directed RNA polymerase</molecule>
    <text evidence="2">Replicates the viral genomic RNA on the surface of intracellular membranes. May form linear arrays of subunits that propagate along a strong head-to-tail interaction called interface-I. Covalently attaches UMP to a tyrosine of VPg, which is used to prime RNA synthesis. The positive stranded RNA genome is first replicated at virus induced membranous vesicles, creating a dsRNA genomic replication form. This dsRNA is then used as template to synthesize positive stranded RNA genomes. ss(+)RNA genomes are either translated, replicated or encapsidated (By similarity).</text>
</comment>
<comment type="catalytic activity">
    <molecule>Protein 2C</molecule>
    <reaction evidence="2">
        <text>a ribonucleoside 5'-triphosphate + H2O = a ribonucleoside 5'-diphosphate + phosphate + H(+)</text>
        <dbReference type="Rhea" id="RHEA:23680"/>
        <dbReference type="ChEBI" id="CHEBI:15377"/>
        <dbReference type="ChEBI" id="CHEBI:15378"/>
        <dbReference type="ChEBI" id="CHEBI:43474"/>
        <dbReference type="ChEBI" id="CHEBI:57930"/>
        <dbReference type="ChEBI" id="CHEBI:61557"/>
        <dbReference type="EC" id="3.6.1.15"/>
    </reaction>
</comment>
<comment type="catalytic activity">
    <molecule>Protease 2A</molecule>
    <reaction evidence="2">
        <text>Selective cleavage of Tyr-|-Gly bond in the picornavirus polyprotein.</text>
        <dbReference type="EC" id="3.4.22.29"/>
    </reaction>
</comment>
<comment type="catalytic activity">
    <molecule>RNA-directed RNA polymerase</molecule>
    <reaction evidence="8">
        <text>RNA(n) + a ribonucleoside 5'-triphosphate = RNA(n+1) + diphosphate</text>
        <dbReference type="Rhea" id="RHEA:21248"/>
        <dbReference type="Rhea" id="RHEA-COMP:14527"/>
        <dbReference type="Rhea" id="RHEA-COMP:17342"/>
        <dbReference type="ChEBI" id="CHEBI:33019"/>
        <dbReference type="ChEBI" id="CHEBI:61557"/>
        <dbReference type="ChEBI" id="CHEBI:140395"/>
        <dbReference type="EC" id="2.7.7.48"/>
    </reaction>
</comment>
<comment type="catalytic activity">
    <molecule>Protease 3C</molecule>
    <reaction evidence="10">
        <text>Selective cleavage of Gln-|-Gly bond in the poliovirus polyprotein. In other picornavirus reactions Glu may be substituted for Gln, and Ser or Thr for Gly.</text>
        <dbReference type="EC" id="3.4.22.28"/>
    </reaction>
</comment>
<comment type="cofactor">
    <molecule>RNA-directed RNA polymerase</molecule>
    <cofactor evidence="2">
        <name>Mg(2+)</name>
        <dbReference type="ChEBI" id="CHEBI:18420"/>
    </cofactor>
    <text evidence="2 5">Binds 2 magnesium ions that constitute a dinuclear catalytic metal center (By similarity). The magnesium ions are not prebound but only present for catalysis (By similarity). Requires the presence of 3CDpro or 3CPro (By similarity).</text>
</comment>
<comment type="activity regulation">
    <molecule>RNA-directed RNA polymerase</molecule>
    <text evidence="2">Replication or transcription is subject to high level of random mutations by the nucleotide analog ribavirin.</text>
</comment>
<comment type="subunit">
    <molecule>Capsid protein VP0</molecule>
    <text evidence="2">Interacts with capsid protein VP1 and capsid protein VP3 to form heterotrimeric protomers.</text>
</comment>
<comment type="subunit">
    <molecule>Capsid protein VP1</molecule>
    <text evidence="2">Interacts with capsid protein VP0, and capsid protein VP3 to form heterotrimeric protomers (By similarity). Five protomers subsequently associate to form pentamers which serve as building blocks for the capsid (By similarity). Interacts with capsid protein VP2, capsid protein VP3 and capsid protein VP4 following cleavage of capsid protein VP0 (By similarity).</text>
</comment>
<comment type="subunit">
    <molecule>Capsid protein VP2</molecule>
    <text evidence="2">Interacts with capsid protein VP1 and capsid protein VP3 in the mature capsid.</text>
</comment>
<comment type="subunit">
    <molecule>Capsid protein VP3</molecule>
    <text evidence="2">Interacts with capsid protein VP0 and capsid protein VP1 to form heterotrimeric protomers (By similarity). Five protomers subsequently associate to form pentamers which serve as building blocks for the capsid (By similarity). Interacts with capsid protein VP4 in the mature capsid (By similarity). Interacts with protein 2C; this interaction may be important for virion morphogenesis (By similarity).</text>
</comment>
<comment type="subunit">
    <molecule>Capsid protein VP4</molecule>
    <text evidence="2">Interacts with capsid protein VP1 and capsid protein VP3.</text>
</comment>
<comment type="subunit">
    <molecule>Protease 2A</molecule>
    <text evidence="13">Homodimer.</text>
</comment>
<comment type="subunit">
    <molecule>Protein 2C</molecule>
    <text evidence="2 12">Homohexamer; forms a hexameric ring structure with 6-fold symmetry characteristic of AAA+ ATPases (By similarity). Interacts (via N-terminus) with host RTN3 (via reticulon domain); this interaction is important for viral replication (PubMed:17182608). Interacts with capsid protein VP3; this interaction may be important for virion morphogenesis (By similarity).</text>
</comment>
<comment type="subunit">
    <molecule>Protein 3AB</molecule>
    <text evidence="2">Interacts with protein 3CD.</text>
</comment>
<comment type="subunit">
    <molecule>Protein 3A</molecule>
    <text evidence="2">Homodimer (By similarity). Interacts with host GBF1 (By similarity). Interacts (via GOLD domain) with host ACBD3 (via GOLD domain); this interaction allows the formation of a viral protein 3A/ACBD3 heterotetramer with a 2:2 stoichiometry, which will stimulate the recruitment of host PI4KB in order to synthesize PI4P at the viral RNA replication sites (By similarity).</text>
</comment>
<comment type="subunit">
    <molecule>Viral protein genome-linked</molecule>
    <text evidence="2">Interacts with RNA-directed RNA polymerase.</text>
</comment>
<comment type="subunit">
    <molecule>Protease 3C</molecule>
    <text evidence="14">Interacts with host IFIH1/MDA5; this interaction inhibits host IFIH1.</text>
</comment>
<comment type="subunit">
    <molecule>Protein 3CD</molecule>
    <text evidence="2">Protein 3CD: Interacts with protein 3AB and with RNA-directed RNA polymerase.</text>
</comment>
<comment type="subunit">
    <molecule>RNA-directed RNA polymerase</molecule>
    <text evidence="2">Interacts with Viral protein genome-linked and with protein 3CD.</text>
</comment>
<comment type="subcellular location">
    <molecule>Capsid protein VP0</molecule>
    <subcellularLocation>
        <location>Virion</location>
    </subcellularLocation>
    <subcellularLocation>
        <location evidence="15">Host cytoplasm</location>
    </subcellularLocation>
</comment>
<comment type="subcellular location">
    <molecule>Capsid protein VP4</molecule>
    <subcellularLocation>
        <location>Virion</location>
    </subcellularLocation>
</comment>
<comment type="subcellular location">
    <molecule>Capsid protein VP2</molecule>
    <subcellularLocation>
        <location evidence="2">Virion</location>
    </subcellularLocation>
    <subcellularLocation>
        <location evidence="15">Host cytoplasm</location>
    </subcellularLocation>
</comment>
<comment type="subcellular location">
    <molecule>Capsid protein VP3</molecule>
    <subcellularLocation>
        <location evidence="2">Virion</location>
    </subcellularLocation>
    <subcellularLocation>
        <location evidence="15">Host cytoplasm</location>
    </subcellularLocation>
</comment>
<comment type="subcellular location">
    <molecule>Capsid protein VP1</molecule>
    <subcellularLocation>
        <location evidence="2">Virion</location>
    </subcellularLocation>
    <subcellularLocation>
        <location evidence="15">Host cytoplasm</location>
    </subcellularLocation>
</comment>
<comment type="subcellular location">
    <molecule>Protein 2B</molecule>
    <subcellularLocation>
        <location evidence="15">Host cytoplasmic vesicle membrane</location>
        <topology evidence="15">Peripheral membrane protein</topology>
        <orientation evidence="15">Cytoplasmic side</orientation>
    </subcellularLocation>
    <text>Probably localizes to the surface of intracellular membrane vesicles that are induced after virus infection as the site for viral RNA replication. These vesicles are derived from the endoplasmic reticulum.</text>
</comment>
<comment type="subcellular location">
    <molecule>Protein 2C</molecule>
    <subcellularLocation>
        <location evidence="15">Host cytoplasmic vesicle membrane</location>
        <topology evidence="15">Peripheral membrane protein</topology>
        <orientation evidence="15">Cytoplasmic side</orientation>
    </subcellularLocation>
    <text>Probably localizes to the surface of intracellular membrane vesicles that are induced after virus infection as the site for viral RNA replication. These vesicles are derived from the endoplasmic reticulum.</text>
</comment>
<comment type="subcellular location">
    <molecule>Protein 3A</molecule>
    <subcellularLocation>
        <location evidence="15">Host cytoplasmic vesicle membrane</location>
        <topology evidence="15">Peripheral membrane protein</topology>
        <orientation evidence="15">Cytoplasmic side</orientation>
    </subcellularLocation>
    <text>Probably localizes to the surface of intracellular membrane vesicles that are induced after virus infection as the site for viral RNA replication. These vesicles are derived from the endoplasmic reticulum.</text>
</comment>
<comment type="subcellular location">
    <molecule>Protein 3AB</molecule>
    <subcellularLocation>
        <location evidence="15">Host cytoplasmic vesicle membrane</location>
        <topology evidence="15">Peripheral membrane protein</topology>
        <orientation evidence="15">Cytoplasmic side</orientation>
    </subcellularLocation>
    <text>Probably localizes to the surface of intracellular membrane vesicles that are induced after virus infection as the site for viral RNA replication. These vesicles are derived from the endoplasmic reticulum.</text>
</comment>
<comment type="subcellular location">
    <molecule>Viral protein genome-linked</molecule>
    <subcellularLocation>
        <location evidence="2">Virion</location>
    </subcellularLocation>
    <subcellularLocation>
        <location evidence="6">Host cytoplasm</location>
    </subcellularLocation>
</comment>
<comment type="subcellular location">
    <molecule>Protease 3C</molecule>
    <subcellularLocation>
        <location>Host cytoplasm</location>
    </subcellularLocation>
</comment>
<comment type="subcellular location">
    <molecule>Protein 3CD</molecule>
    <subcellularLocation>
        <location evidence="2">Host nucleus</location>
    </subcellularLocation>
    <subcellularLocation>
        <location evidence="2">Host cytoplasm</location>
    </subcellularLocation>
    <subcellularLocation>
        <location evidence="15">Host cytoplasmic vesicle membrane</location>
        <topology evidence="15">Peripheral membrane protein</topology>
        <orientation evidence="15">Cytoplasmic side</orientation>
    </subcellularLocation>
    <text>Probably localizes to the surface of intracellular membrane vesicles that are induced after virus infection as the site for viral RNA replication. These vesicles are derived from the endoplasmic reticulum.</text>
</comment>
<comment type="subcellular location">
    <molecule>RNA-directed RNA polymerase</molecule>
    <subcellularLocation>
        <location evidence="15">Host cytoplasmic vesicle membrane</location>
        <topology evidence="15">Peripheral membrane protein</topology>
        <orientation evidence="15">Cytoplasmic side</orientation>
    </subcellularLocation>
    <text>Probably localizes to the surface of intracellular membrane vesicles that are induced after virus infection as the site for viral RNA replication. These vesicles are derived from the endoplasmic reticulum.</text>
</comment>
<comment type="domain">
    <molecule>Protein 2C</molecule>
    <text evidence="1 2">The N-terminus has membrane-binding (By similarity). The N-terminus also displays RNA-binding properties (By similarity). The N-terminus is involved in oligomerization (By similarity). The central part contains an ATPase domain and a degenerate C4-type zinc-finger with only 3 cysteines (By similarity). The C-terminus is involved in RNA-binding (By similarity). The extreme C-terminus contains a region involved in oligomerization (By similarity).</text>
</comment>
<comment type="PTM">
    <molecule>Genome polyprotein</molecule>
    <text evidence="2">Specific enzymatic cleavages in vivo by the viral proteases yield processing intermediates and the mature proteins.</text>
</comment>
<comment type="PTM">
    <molecule>Capsid protein VP0</molecule>
    <text evidence="2">Myristoylation is required for the formation of pentamers during virus assembly. Further assembly of 12 pentamers and a molecule of genomic RNA generates the provirion.</text>
</comment>
<comment type="PTM">
    <molecule>Capsid protein VP0</molecule>
    <text evidence="2">During virion maturation, immature virions are rendered infectious following cleavage of VP0 into VP4 and VP2. This maturation seems to be an autocatalytic event triggered by the presence of RNA in the capsid and it is followed by a conformational change infectious virion.</text>
</comment>
<comment type="PTM">
    <molecule>Capsid protein VP4</molecule>
    <text evidence="2">Myristoylation is required during RNA encapsidation and formation of the mature virus particle.</text>
</comment>
<comment type="PTM">
    <molecule>Viral protein genome-linked</molecule>
    <text evidence="2">VPg is uridylylated by the polymerase into VPg-pUpU. This acts as a nucleotide-peptide primer for the genomic RNA replication.</text>
</comment>
<comment type="similarity">
    <text evidence="15">Belongs to the picornaviruses polyprotein family.</text>
</comment>
<reference key="1">
    <citation type="journal article" date="2001" name="J. Med. Virol.">
        <title>Complete genome analysis of enterovirus 71 isolated from an outbreak in Taiwan and rapid identification of enterovirus 71 and coxsackievirus A16 by RT-PCR.</title>
        <authorList>
            <person name="Yan J.-J."/>
            <person name="Su I.-J."/>
            <person name="Chen P.-F."/>
            <person name="Liu C.-C."/>
            <person name="Yu C.-K."/>
            <person name="Wang J.-R."/>
        </authorList>
    </citation>
    <scope>NUCLEOTIDE SEQUENCE [GENOMIC RNA]</scope>
</reference>
<reference key="2">
    <citation type="journal article" date="2007" name="J. Biol. Chem.">
        <title>Reticulon 3 binds the 2C protein of enterovirus 71 and is required for viral replication.</title>
        <authorList>
            <person name="Tang W.-F."/>
            <person name="Yang S.-Y."/>
            <person name="Wu B.-W."/>
            <person name="Jheng J.-R."/>
            <person name="Chen Y.-L."/>
            <person name="Shih C.-H."/>
            <person name="Lin K.-H."/>
            <person name="Lai H.-C."/>
            <person name="Tang P."/>
            <person name="Horng J.-T."/>
        </authorList>
    </citation>
    <scope>INTERACTION WITH HOST RTN3 (PROTEIN 2C)</scope>
</reference>
<reference key="3">
    <citation type="journal article" date="2017" name="J. Virol.">
        <title>Disruption of MDA5-Mediated Innate Immune Responses by the 3C Proteins of Coxsackievirus A16, Coxsackievirus A6, and Enterovirus D68.</title>
        <authorList>
            <person name="Rui Y."/>
            <person name="Su J."/>
            <person name="Wang H."/>
            <person name="Chang J."/>
            <person name="Wang S."/>
            <person name="Zheng W."/>
            <person name="Cai Y."/>
            <person name="Wei W."/>
            <person name="Gordy J.T."/>
            <person name="Markham R."/>
            <person name="Kong W."/>
            <person name="Zhang W."/>
            <person name="Yu X.F."/>
        </authorList>
    </citation>
    <scope>INTERACTION WITH HOST IFIH1 (PROTEASE 3C)</scope>
    <scope>FUNCTION (PROTEASE 3C)</scope>
    <scope>INTERACTION WITH HOST MAP3K7 (PROTEASE 3C)</scope>
    <source>
        <strain>CC024</strain>
    </source>
</reference>
<reference evidence="16" key="4">
    <citation type="journal article" date="2013" name="Protein Cell">
        <title>An open conformation determined by a structural switch for 2A protease from coxsackievirus A16.</title>
        <authorList>
            <person name="Sun Y."/>
            <person name="Wang X."/>
            <person name="Yuan S."/>
            <person name="Dang M."/>
            <person name="Li X."/>
            <person name="Zhang X.C."/>
            <person name="Rao Z."/>
        </authorList>
    </citation>
    <scope>X-RAY CRYSTALLOGRAPHY (1.80 ANGSTROMS) OF 863-1007 IN COMPLEX WITH ZINC</scope>
    <scope>SUBUNIT (PROTEASE 2A)</scope>
</reference>
<proteinExistence type="evidence at protein level"/>
<feature type="initiator methionine" description="Removed; by host" evidence="2">
    <location>
        <position position="1"/>
    </location>
</feature>
<feature type="chain" id="PRO_0000426193" description="Genome polyprotein">
    <location>
        <begin position="2"/>
        <end position="2193"/>
    </location>
</feature>
<feature type="chain" id="PRO_0000426194" description="P1">
    <location>
        <begin position="2"/>
        <end position="862"/>
    </location>
</feature>
<feature type="chain" id="PRO_0000426195" description="Capsid protein VP0">
    <location>
        <begin position="2"/>
        <end position="323"/>
    </location>
</feature>
<feature type="chain" id="PRO_0000426196" description="Capsid protein VP4">
    <location>
        <begin position="2"/>
        <end position="69"/>
    </location>
</feature>
<feature type="chain" id="PRO_0000426197" description="Capsid protein VP2">
    <location>
        <begin position="70"/>
        <end position="323"/>
    </location>
</feature>
<feature type="chain" id="PRO_0000426198" description="Capsid protein VP3">
    <location>
        <begin position="324"/>
        <end position="565"/>
    </location>
</feature>
<feature type="chain" id="PRO_0000426199" description="Capsid protein VP1">
    <location>
        <begin position="566"/>
        <end position="862"/>
    </location>
</feature>
<feature type="chain" id="PRO_0000426200" description="P2">
    <location>
        <begin position="863"/>
        <end position="1440"/>
    </location>
</feature>
<feature type="chain" id="PRO_0000039529" description="Protease 2A">
    <location>
        <begin position="863"/>
        <end position="1012"/>
    </location>
</feature>
<feature type="chain" id="PRO_0000039530" description="Protein 2B">
    <location>
        <begin position="1013"/>
        <end position="1111"/>
    </location>
</feature>
<feature type="chain" id="PRO_0000039531" description="Protein 2C">
    <location>
        <begin position="1112"/>
        <end position="1440"/>
    </location>
</feature>
<feature type="chain" id="PRO_0000426201" description="P3">
    <location>
        <begin position="1441"/>
        <end position="2193"/>
    </location>
</feature>
<feature type="chain" id="PRO_0000426202" description="Protein 3AB">
    <location>
        <begin position="1441"/>
        <end position="1548"/>
    </location>
</feature>
<feature type="chain" id="PRO_0000039532" description="Protein 3A">
    <location>
        <begin position="1441"/>
        <end position="1526"/>
    </location>
</feature>
<feature type="chain" id="PRO_0000426203" description="Viral protein genome-linked">
    <location>
        <begin position="1527"/>
        <end position="1548"/>
    </location>
</feature>
<feature type="chain" id="PRO_0000426204" description="Protein 3CD">
    <location>
        <begin position="1549"/>
        <end position="2193"/>
    </location>
</feature>
<feature type="chain" id="PRO_0000426205" description="Protease 3C">
    <location>
        <begin position="1549"/>
        <end position="1731"/>
    </location>
</feature>
<feature type="chain" id="PRO_0000426206" description="RNA-directed RNA polymerase">
    <location>
        <begin position="1732"/>
        <end position="2193"/>
    </location>
</feature>
<feature type="topological domain" description="Cytoplasmic" evidence="7">
    <location>
        <begin position="2"/>
        <end position="1503"/>
    </location>
</feature>
<feature type="intramembrane region" evidence="7">
    <location>
        <begin position="1504"/>
        <end position="1519"/>
    </location>
</feature>
<feature type="topological domain" description="Cytoplasmic" evidence="7">
    <location>
        <begin position="1520"/>
        <end position="2193"/>
    </location>
</feature>
<feature type="domain" description="SF3 helicase" evidence="9">
    <location>
        <begin position="1216"/>
        <end position="1374"/>
    </location>
</feature>
<feature type="domain" description="Peptidase C3" evidence="10">
    <location>
        <begin position="1549"/>
        <end position="1727"/>
    </location>
</feature>
<feature type="domain" description="RdRp catalytic" evidence="8">
    <location>
        <begin position="1958"/>
        <end position="2074"/>
    </location>
</feature>
<feature type="zinc finger region" description="C4-type; degenerate" evidence="1">
    <location>
        <begin position="1381"/>
        <end position="1397"/>
    </location>
</feature>
<feature type="region of interest" description="Disordered" evidence="11">
    <location>
        <begin position="1"/>
        <end position="23"/>
    </location>
</feature>
<feature type="region of interest" description="Amphipathic alpha-helix" evidence="7">
    <location>
        <begin position="566"/>
        <end position="588"/>
    </location>
</feature>
<feature type="region of interest" description="Oligomerization" evidence="2">
    <location>
        <begin position="1112"/>
        <end position="1250"/>
    </location>
</feature>
<feature type="region of interest" description="Membrane-binding" evidence="2">
    <location>
        <begin position="1112"/>
        <end position="1184"/>
    </location>
</feature>
<feature type="region of interest" description="RNA-binding" evidence="2">
    <location>
        <begin position="1133"/>
        <end position="1137"/>
    </location>
</feature>
<feature type="region of interest" description="RNA-binding" evidence="2">
    <location>
        <begin position="1424"/>
        <end position="1431"/>
    </location>
</feature>
<feature type="region of interest" description="Oligomerization" evidence="2">
    <location>
        <begin position="1435"/>
        <end position="1440"/>
    </location>
</feature>
<feature type="active site" description="For protease 2A activity" evidence="2">
    <location>
        <position position="883"/>
    </location>
</feature>
<feature type="active site" description="For protease 2A activity" evidence="2">
    <location>
        <position position="901"/>
    </location>
</feature>
<feature type="active site" description="For protease 2A activity" evidence="2">
    <location>
        <position position="972"/>
    </location>
</feature>
<feature type="active site" description="For protease 3C activity" evidence="10">
    <location>
        <position position="1588"/>
    </location>
</feature>
<feature type="active site" description="For protease 3C activity" evidence="10">
    <location>
        <position position="1619"/>
    </location>
</feature>
<feature type="active site" description="For protease 3C activity" evidence="10">
    <location>
        <position position="1695"/>
    </location>
</feature>
<feature type="binding site" evidence="13">
    <location>
        <position position="918"/>
    </location>
    <ligand>
        <name>Zn(2+)</name>
        <dbReference type="ChEBI" id="CHEBI:29105"/>
        <label>1</label>
        <note>structural</note>
    </ligand>
</feature>
<feature type="binding site" evidence="13">
    <location>
        <position position="920"/>
    </location>
    <ligand>
        <name>Zn(2+)</name>
        <dbReference type="ChEBI" id="CHEBI:29105"/>
        <label>1</label>
        <note>structural</note>
    </ligand>
</feature>
<feature type="binding site" evidence="13">
    <location>
        <position position="978"/>
    </location>
    <ligand>
        <name>Zn(2+)</name>
        <dbReference type="ChEBI" id="CHEBI:29105"/>
        <label>1</label>
        <note>structural</note>
    </ligand>
</feature>
<feature type="binding site" evidence="13">
    <location>
        <position position="980"/>
    </location>
    <ligand>
        <name>Zn(2+)</name>
        <dbReference type="ChEBI" id="CHEBI:29105"/>
        <label>1</label>
        <note>structural</note>
    </ligand>
</feature>
<feature type="binding site" evidence="9">
    <location>
        <begin position="1240"/>
        <end position="1247"/>
    </location>
    <ligand>
        <name>ATP</name>
        <dbReference type="ChEBI" id="CHEBI:30616"/>
    </ligand>
</feature>
<feature type="binding site" evidence="1">
    <location>
        <position position="1381"/>
    </location>
    <ligand>
        <name>Zn(2+)</name>
        <dbReference type="ChEBI" id="CHEBI:29105"/>
        <label>2</label>
    </ligand>
</feature>
<feature type="binding site" evidence="1">
    <location>
        <position position="1392"/>
    </location>
    <ligand>
        <name>Zn(2+)</name>
        <dbReference type="ChEBI" id="CHEBI:29105"/>
        <label>2</label>
    </ligand>
</feature>
<feature type="binding site" evidence="1">
    <location>
        <position position="1397"/>
    </location>
    <ligand>
        <name>Zn(2+)</name>
        <dbReference type="ChEBI" id="CHEBI:29105"/>
        <label>2</label>
    </ligand>
</feature>
<feature type="binding site" evidence="2">
    <location>
        <position position="1964"/>
    </location>
    <ligand>
        <name>Mg(2+)</name>
        <dbReference type="ChEBI" id="CHEBI:18420"/>
        <label>1</label>
        <note>catalytic; for RdRp activity</note>
    </ligand>
</feature>
<feature type="binding site" evidence="2">
    <location>
        <position position="1964"/>
    </location>
    <ligand>
        <name>Mg(2+)</name>
        <dbReference type="ChEBI" id="CHEBI:18420"/>
        <label>2</label>
        <note>catalytic; for RdRp activity</note>
    </ligand>
</feature>
<feature type="binding site" evidence="2">
    <location>
        <position position="2060"/>
    </location>
    <ligand>
        <name>Mg(2+)</name>
        <dbReference type="ChEBI" id="CHEBI:18420"/>
        <label>1</label>
        <note>catalytic; for RdRp activity</note>
    </ligand>
</feature>
<feature type="binding site" evidence="2">
    <location>
        <position position="2060"/>
    </location>
    <ligand>
        <name>Mg(2+)</name>
        <dbReference type="ChEBI" id="CHEBI:18420"/>
        <label>2</label>
        <note>catalytic; for RdRp activity</note>
    </ligand>
</feature>
<feature type="site" description="Cleavage; by autolysis" evidence="2">
    <location>
        <begin position="69"/>
        <end position="70"/>
    </location>
</feature>
<feature type="site" description="Cleavage; by protease 3C" evidence="3">
    <location>
        <begin position="323"/>
        <end position="324"/>
    </location>
</feature>
<feature type="site" description="Cleavage; by autolysis" evidence="3">
    <location>
        <begin position="862"/>
        <end position="863"/>
    </location>
</feature>
<feature type="site" description="Cleavage; by protease 3C" evidence="3">
    <location>
        <begin position="1012"/>
        <end position="1013"/>
    </location>
</feature>
<feature type="site" description="Cleavage; by protease 3C" evidence="3">
    <location>
        <begin position="1111"/>
        <end position="1112"/>
    </location>
</feature>
<feature type="site" description="Involved in the interaction with host RTN3" evidence="6">
    <location>
        <position position="1136"/>
    </location>
</feature>
<feature type="site" description="Cleavage; by protease 3C" evidence="3">
    <location>
        <begin position="1440"/>
        <end position="1441"/>
    </location>
</feature>
<feature type="site" description="Cleavage; by protease 3C" evidence="3">
    <location>
        <begin position="1526"/>
        <end position="1527"/>
    </location>
</feature>
<feature type="site" description="Cleavage; by protease 3C" evidence="3">
    <location>
        <begin position="1548"/>
        <end position="1549"/>
    </location>
</feature>
<feature type="site" description="Cleavage; by protease 3C" evidence="3">
    <location>
        <begin position="1731"/>
        <end position="1732"/>
    </location>
</feature>
<feature type="modified residue" description="O-(5'-phospho-RNA)-tyrosine" evidence="2">
    <location>
        <position position="1529"/>
    </location>
</feature>
<feature type="lipid moiety-binding region" description="N-myristoyl glycine; by host" evidence="2">
    <location>
        <position position="2"/>
    </location>
</feature>
<feature type="turn" evidence="18">
    <location>
        <begin position="19"/>
        <end position="22"/>
    </location>
</feature>
<feature type="strand" evidence="19">
    <location>
        <begin position="25"/>
        <end position="27"/>
    </location>
</feature>
<feature type="strand" evidence="18">
    <location>
        <begin position="33"/>
        <end position="35"/>
    </location>
</feature>
<feature type="helix" evidence="18">
    <location>
        <begin position="36"/>
        <end position="38"/>
    </location>
</feature>
<feature type="helix" evidence="20">
    <location>
        <begin position="51"/>
        <end position="54"/>
    </location>
</feature>
<feature type="strand" evidence="20">
    <location>
        <begin position="57"/>
        <end position="59"/>
    </location>
</feature>
<feature type="strand" evidence="20">
    <location>
        <begin position="63"/>
        <end position="65"/>
    </location>
</feature>
<feature type="turn" evidence="18">
    <location>
        <begin position="73"/>
        <end position="75"/>
    </location>
</feature>
<feature type="strand" evidence="18">
    <location>
        <begin position="83"/>
        <end position="87"/>
    </location>
</feature>
<feature type="strand" evidence="18">
    <location>
        <begin position="90"/>
        <end position="95"/>
    </location>
</feature>
<feature type="helix" evidence="18">
    <location>
        <begin position="97"/>
        <end position="99"/>
    </location>
</feature>
<feature type="strand" evidence="18">
    <location>
        <begin position="100"/>
        <end position="102"/>
    </location>
</feature>
<feature type="helix" evidence="18">
    <location>
        <begin position="103"/>
        <end position="105"/>
    </location>
</feature>
<feature type="turn" evidence="18">
    <location>
        <begin position="113"/>
        <end position="115"/>
    </location>
</feature>
<feature type="helix" evidence="18">
    <location>
        <begin position="126"/>
        <end position="128"/>
    </location>
</feature>
<feature type="strand" evidence="18">
    <location>
        <begin position="138"/>
        <end position="140"/>
    </location>
</feature>
<feature type="strand" evidence="18">
    <location>
        <begin position="147"/>
        <end position="151"/>
    </location>
</feature>
<feature type="helix" evidence="18">
    <location>
        <begin position="153"/>
        <end position="155"/>
    </location>
</feature>
<feature type="helix" evidence="18">
    <location>
        <begin position="159"/>
        <end position="167"/>
    </location>
</feature>
<feature type="strand" evidence="18">
    <location>
        <begin position="168"/>
        <end position="180"/>
    </location>
</feature>
<feature type="strand" evidence="18">
    <location>
        <begin position="188"/>
        <end position="198"/>
    </location>
</feature>
<feature type="turn" evidence="18">
    <location>
        <begin position="205"/>
        <end position="208"/>
    </location>
</feature>
<feature type="helix" evidence="18">
    <location>
        <begin position="217"/>
        <end position="220"/>
    </location>
</feature>
<feature type="helix" evidence="18">
    <location>
        <begin position="223"/>
        <end position="225"/>
    </location>
</feature>
<feature type="helix" evidence="18">
    <location>
        <begin position="232"/>
        <end position="234"/>
    </location>
</feature>
<feature type="turn" evidence="18">
    <location>
        <begin position="235"/>
        <end position="238"/>
    </location>
</feature>
<feature type="helix" evidence="18">
    <location>
        <begin position="241"/>
        <end position="246"/>
    </location>
</feature>
<feature type="strand" evidence="18">
    <location>
        <begin position="247"/>
        <end position="253"/>
    </location>
</feature>
<feature type="turn" evidence="18">
    <location>
        <begin position="254"/>
        <end position="256"/>
    </location>
</feature>
<feature type="strand" evidence="18">
    <location>
        <begin position="258"/>
        <end position="264"/>
    </location>
</feature>
<feature type="strand" evidence="18">
    <location>
        <begin position="269"/>
        <end position="273"/>
    </location>
</feature>
<feature type="turn" evidence="18">
    <location>
        <begin position="275"/>
        <end position="277"/>
    </location>
</feature>
<feature type="strand" evidence="18">
    <location>
        <begin position="281"/>
        <end position="292"/>
    </location>
</feature>
<feature type="strand" evidence="18">
    <location>
        <begin position="301"/>
        <end position="317"/>
    </location>
</feature>
<feature type="turn" evidence="18">
    <location>
        <begin position="331"/>
        <end position="334"/>
    </location>
</feature>
<feature type="strand" evidence="18">
    <location>
        <begin position="345"/>
        <end position="348"/>
    </location>
</feature>
<feature type="strand" evidence="18">
    <location>
        <begin position="362"/>
        <end position="365"/>
    </location>
</feature>
<feature type="helix" evidence="18">
    <location>
        <begin position="367"/>
        <end position="370"/>
    </location>
</feature>
<feature type="helix" evidence="18">
    <location>
        <begin position="382"/>
        <end position="384"/>
    </location>
</feature>
<feature type="helix" evidence="18">
    <location>
        <begin position="388"/>
        <end position="392"/>
    </location>
</feature>
<feature type="strand" evidence="18">
    <location>
        <begin position="394"/>
        <end position="397"/>
    </location>
</feature>
<feature type="strand" evidence="18">
    <location>
        <begin position="405"/>
        <end position="410"/>
    </location>
</feature>
<feature type="strand" evidence="18">
    <location>
        <begin position="415"/>
        <end position="417"/>
    </location>
</feature>
<feature type="helix" evidence="18">
    <location>
        <begin position="418"/>
        <end position="421"/>
    </location>
</feature>
<feature type="helix" evidence="18">
    <location>
        <begin position="423"/>
        <end position="428"/>
    </location>
</feature>
<feature type="strand" evidence="18">
    <location>
        <begin position="431"/>
        <end position="436"/>
    </location>
</feature>
<feature type="strand" evidence="18">
    <location>
        <begin position="438"/>
        <end position="444"/>
    </location>
</feature>
<feature type="strand" evidence="18">
    <location>
        <begin position="453"/>
        <end position="459"/>
    </location>
</feature>
<feature type="strand" evidence="18">
    <location>
        <begin position="461"/>
        <end position="465"/>
    </location>
</feature>
<feature type="helix" evidence="18">
    <location>
        <begin position="469"/>
        <end position="472"/>
    </location>
</feature>
<feature type="strand" evidence="18">
    <location>
        <begin position="475"/>
        <end position="481"/>
    </location>
</feature>
<feature type="turn" evidence="18">
    <location>
        <begin position="482"/>
        <end position="484"/>
    </location>
</feature>
<feature type="strand" evidence="18">
    <location>
        <begin position="486"/>
        <end position="492"/>
    </location>
</feature>
<feature type="strand" evidence="18">
    <location>
        <begin position="497"/>
        <end position="502"/>
    </location>
</feature>
<feature type="helix" evidence="18">
    <location>
        <begin position="508"/>
        <end position="512"/>
    </location>
</feature>
<feature type="strand" evidence="18">
    <location>
        <begin position="516"/>
        <end position="523"/>
    </location>
</feature>
<feature type="strand" evidence="18">
    <location>
        <begin position="533"/>
        <end position="543"/>
    </location>
</feature>
<feature type="strand" evidence="18">
    <location>
        <begin position="548"/>
        <end position="552"/>
    </location>
</feature>
<feature type="helix" evidence="18">
    <location>
        <begin position="625"/>
        <end position="628"/>
    </location>
</feature>
<feature type="helix" evidence="18">
    <location>
        <begin position="641"/>
        <end position="643"/>
    </location>
</feature>
<feature type="helix" evidence="18">
    <location>
        <begin position="645"/>
        <end position="649"/>
    </location>
</feature>
<feature type="strand" evidence="18">
    <location>
        <begin position="653"/>
        <end position="660"/>
    </location>
</feature>
<feature type="strand" evidence="18">
    <location>
        <begin position="662"/>
        <end position="667"/>
    </location>
</feature>
<feature type="strand" evidence="18">
    <location>
        <begin position="669"/>
        <end position="675"/>
    </location>
</feature>
<feature type="helix" evidence="18">
    <location>
        <begin position="682"/>
        <end position="688"/>
    </location>
</feature>
<feature type="strand" evidence="18">
    <location>
        <begin position="691"/>
        <end position="705"/>
    </location>
</feature>
<feature type="strand" evidence="18">
    <location>
        <begin position="715"/>
        <end position="721"/>
    </location>
</feature>
<feature type="helix" evidence="18">
    <location>
        <begin position="734"/>
        <end position="737"/>
    </location>
</feature>
<feature type="strand" evidence="18">
    <location>
        <begin position="739"/>
        <end position="741"/>
    </location>
</feature>
<feature type="strand" evidence="18">
    <location>
        <begin position="743"/>
        <end position="747"/>
    </location>
</feature>
<feature type="strand" evidence="18">
    <location>
        <begin position="753"/>
        <end position="757"/>
    </location>
</feature>
<feature type="strand" evidence="18">
    <location>
        <begin position="762"/>
        <end position="768"/>
    </location>
</feature>
<feature type="helix" evidence="18">
    <location>
        <begin position="781"/>
        <end position="786"/>
    </location>
</feature>
<feature type="helix" evidence="18">
    <location>
        <begin position="791"/>
        <end position="793"/>
    </location>
</feature>
<feature type="strand" evidence="18">
    <location>
        <begin position="797"/>
        <end position="806"/>
    </location>
</feature>
<feature type="strand" evidence="18">
    <location>
        <begin position="812"/>
        <end position="828"/>
    </location>
</feature>
<feature type="strand" evidence="18">
    <location>
        <begin position="838"/>
        <end position="841"/>
    </location>
</feature>
<feature type="helix" evidence="18">
    <location>
        <begin position="846"/>
        <end position="848"/>
    </location>
</feature>
<feature type="strand" evidence="17">
    <location>
        <begin position="869"/>
        <end position="881"/>
    </location>
</feature>
<feature type="helix" evidence="17">
    <location>
        <begin position="882"/>
        <end position="884"/>
    </location>
</feature>
<feature type="helix" evidence="17">
    <location>
        <begin position="887"/>
        <end position="891"/>
    </location>
</feature>
<feature type="strand" evidence="17">
    <location>
        <begin position="893"/>
        <end position="897"/>
    </location>
</feature>
<feature type="helix" evidence="17">
    <location>
        <begin position="898"/>
        <end position="900"/>
    </location>
</feature>
<feature type="strand" evidence="17">
    <location>
        <begin position="902"/>
        <end position="912"/>
    </location>
</feature>
<feature type="strand" evidence="17">
    <location>
        <begin position="922"/>
        <end position="927"/>
    </location>
</feature>
<feature type="turn" evidence="17">
    <location>
        <begin position="928"/>
        <end position="931"/>
    </location>
</feature>
<feature type="strand" evidence="17">
    <location>
        <begin position="932"/>
        <end position="937"/>
    </location>
</feature>
<feature type="strand" evidence="17">
    <location>
        <begin position="942"/>
        <end position="946"/>
    </location>
</feature>
<feature type="strand" evidence="17">
    <location>
        <begin position="950"/>
        <end position="952"/>
    </location>
</feature>
<feature type="strand" evidence="17">
    <location>
        <begin position="954"/>
        <end position="965"/>
    </location>
</feature>
<feature type="helix" evidence="17">
    <location>
        <begin position="969"/>
        <end position="971"/>
    </location>
</feature>
<feature type="strand" evidence="17">
    <location>
        <begin position="975"/>
        <end position="978"/>
    </location>
</feature>
<feature type="strand" evidence="17">
    <location>
        <begin position="981"/>
        <end position="990"/>
    </location>
</feature>
<feature type="strand" evidence="17">
    <location>
        <begin position="993"/>
        <end position="998"/>
    </location>
</feature>
<feature type="helix" evidence="17">
    <location>
        <begin position="1003"/>
        <end position="1005"/>
    </location>
</feature>
<protein>
    <recommendedName>
        <fullName>Genome polyprotein</fullName>
    </recommendedName>
    <component>
        <recommendedName>
            <fullName>P1</fullName>
        </recommendedName>
    </component>
    <component>
        <recommendedName>
            <fullName>Capsid protein VP0</fullName>
        </recommendedName>
        <alternativeName>
            <fullName>VP4-VP2</fullName>
        </alternativeName>
    </component>
    <component>
        <recommendedName>
            <fullName>Capsid protein VP4</fullName>
        </recommendedName>
        <alternativeName>
            <fullName>P1A</fullName>
        </alternativeName>
        <alternativeName>
            <fullName>Virion protein 4</fullName>
        </alternativeName>
    </component>
    <component>
        <recommendedName>
            <fullName>Capsid protein VP2</fullName>
        </recommendedName>
        <alternativeName>
            <fullName>P1B</fullName>
        </alternativeName>
        <alternativeName>
            <fullName>Virion protein 2</fullName>
        </alternativeName>
    </component>
    <component>
        <recommendedName>
            <fullName>Capsid protein VP3</fullName>
        </recommendedName>
        <alternativeName>
            <fullName>P1C</fullName>
        </alternativeName>
        <alternativeName>
            <fullName>Virion protein 3</fullName>
        </alternativeName>
    </component>
    <component>
        <recommendedName>
            <fullName>Capsid protein VP1</fullName>
        </recommendedName>
        <alternativeName>
            <fullName>P1D</fullName>
        </alternativeName>
        <alternativeName>
            <fullName>Virion protein 1</fullName>
        </alternativeName>
    </component>
    <component>
        <recommendedName>
            <fullName>P2</fullName>
        </recommendedName>
    </component>
    <component>
        <recommendedName>
            <fullName>Protease 2A</fullName>
            <shortName>P2A</shortName>
            <ecNumber evidence="2">3.4.22.29</ecNumber>
        </recommendedName>
        <alternativeName>
            <fullName>Picornain 2A</fullName>
        </alternativeName>
        <alternativeName>
            <fullName>Protein 2A</fullName>
        </alternativeName>
    </component>
    <component>
        <recommendedName>
            <fullName>Protein 2B</fullName>
            <shortName>P2B</shortName>
        </recommendedName>
    </component>
    <component>
        <recommendedName>
            <fullName>Protein 2C</fullName>
            <shortName>P2C</shortName>
            <ecNumber evidence="2">3.6.1.15</ecNumber>
        </recommendedName>
    </component>
    <component>
        <recommendedName>
            <fullName>P3</fullName>
        </recommendedName>
    </component>
    <component>
        <recommendedName>
            <fullName>Protein 3AB</fullName>
        </recommendedName>
    </component>
    <component>
        <recommendedName>
            <fullName>Protein 3A</fullName>
            <shortName>P3A</shortName>
        </recommendedName>
    </component>
    <component>
        <recommendedName>
            <fullName>Viral protein genome-linked</fullName>
            <shortName>VPg</shortName>
        </recommendedName>
        <alternativeName>
            <fullName>Protein 3B</fullName>
            <shortName>P3B</shortName>
        </alternativeName>
    </component>
    <component>
        <recommendedName>
            <fullName>Protein 3CD</fullName>
            <ecNumber>3.4.22.28</ecNumber>
        </recommendedName>
    </component>
    <component>
        <recommendedName>
            <fullName evidence="10">Protease 3C</fullName>
            <ecNumber evidence="10">3.4.22.28</ecNumber>
        </recommendedName>
        <alternativeName>
            <fullName evidence="10">Picornain 3C</fullName>
            <shortName evidence="10">P3C</shortName>
        </alternativeName>
    </component>
    <component>
        <recommendedName>
            <fullName evidence="8">RNA-directed RNA polymerase</fullName>
            <shortName>RdRp</shortName>
            <ecNumber evidence="8">2.7.7.48</ecNumber>
        </recommendedName>
        <alternativeName>
            <fullName>3D polymerase</fullName>
            <shortName>3Dpol</shortName>
        </alternativeName>
        <alternativeName>
            <fullName>Protein 3D</fullName>
            <shortName>3D</shortName>
        </alternativeName>
    </component>
</protein>
<keyword id="KW-0002">3D-structure</keyword>
<keyword id="KW-1072">Activation of host autophagy by virus</keyword>
<keyword id="KW-0067">ATP-binding</keyword>
<keyword id="KW-0068">Autocatalytic cleavage</keyword>
<keyword id="KW-0167">Capsid protein</keyword>
<keyword id="KW-0191">Covalent protein-RNA linkage</keyword>
<keyword id="KW-0235">DNA replication</keyword>
<keyword id="KW-1262">Eukaryotic host gene expression shutoff by virus</keyword>
<keyword id="KW-1193">Eukaryotic host translation shutoff by virus</keyword>
<keyword id="KW-0347">Helicase</keyword>
<keyword id="KW-1035">Host cytoplasm</keyword>
<keyword id="KW-1036">Host cytoplasmic vesicle</keyword>
<keyword id="KW-1190">Host gene expression shutoff by virus</keyword>
<keyword id="KW-1043">Host membrane</keyword>
<keyword id="KW-1192">Host mRNA suppression by virus</keyword>
<keyword id="KW-1048">Host nucleus</keyword>
<keyword id="KW-0945">Host-virus interaction</keyword>
<keyword id="KW-0378">Hydrolase</keyword>
<keyword id="KW-1090">Inhibition of host innate immune response by virus</keyword>
<keyword id="KW-1089">Inhibition of host MDA5 by virus</keyword>
<keyword id="KW-1099">Inhibition of host mRNA nuclear export by virus</keyword>
<keyword id="KW-1100">Inhibition of host NF-kappa-B by virus</keyword>
<keyword id="KW-1113">Inhibition of host RLR pathway by virus</keyword>
<keyword id="KW-0407">Ion channel</keyword>
<keyword id="KW-0406">Ion transport</keyword>
<keyword id="KW-0449">Lipoprotein</keyword>
<keyword id="KW-0460">Magnesium</keyword>
<keyword id="KW-0472">Membrane</keyword>
<keyword id="KW-0479">Metal-binding</keyword>
<keyword id="KW-0519">Myristate</keyword>
<keyword id="KW-0547">Nucleotide-binding</keyword>
<keyword id="KW-0548">Nucleotidyltransferase</keyword>
<keyword id="KW-0597">Phosphoprotein</keyword>
<keyword id="KW-1172">Pore-mediated penetration of viral genome into host cell</keyword>
<keyword id="KW-0645">Protease</keyword>
<keyword id="KW-0677">Repeat</keyword>
<keyword id="KW-0694">RNA-binding</keyword>
<keyword id="KW-0696">RNA-directed RNA polymerase</keyword>
<keyword id="KW-1143">T=pseudo3 icosahedral capsid protein</keyword>
<keyword id="KW-0788">Thiol protease</keyword>
<keyword id="KW-0808">Transferase</keyword>
<keyword id="KW-0813">Transport</keyword>
<keyword id="KW-1161">Viral attachment to host cell</keyword>
<keyword id="KW-0899">Viral immunoevasion</keyword>
<keyword id="KW-1182">Viral ion channel</keyword>
<keyword id="KW-1162">Viral penetration into host cytoplasm</keyword>
<keyword id="KW-0693">Viral RNA replication</keyword>
<keyword id="KW-0946">Virion</keyword>
<keyword id="KW-1164">Virus endocytosis by host</keyword>
<keyword id="KW-1160">Virus entry into host cell</keyword>
<keyword id="KW-0862">Zinc</keyword>
<keyword id="KW-0863">Zinc-finger</keyword>
<name>POLG_CX16T</name>
<organismHost>
    <name type="scientific">Homo sapiens</name>
    <name type="common">Human</name>
    <dbReference type="NCBI Taxonomy" id="9606"/>
</organismHost>
<organism>
    <name type="scientific">Coxsackievirus A16 (strain Tainan/5079/98)</name>
    <dbReference type="NCBI Taxonomy" id="231417"/>
    <lineage>
        <taxon>Viruses</taxon>
        <taxon>Riboviria</taxon>
        <taxon>Orthornavirae</taxon>
        <taxon>Pisuviricota</taxon>
        <taxon>Pisoniviricetes</taxon>
        <taxon>Picornavirales</taxon>
        <taxon>Picornaviridae</taxon>
        <taxon>Ensavirinae</taxon>
        <taxon>Enterovirus</taxon>
        <taxon>Enterovirus A</taxon>
    </lineage>
</organism>
<sequence length="2193" mass="243184">MGSQVSTQRSGSHENSNSASEGSTINYTTINYYKDAYAASAGRQDMSQDPKKFTDPVMDVIHEMAPPLKSPSAEACGYSDRVAQLTIGNSTITTQEAANIVIAYGEWPEYCPDTDATAVDKPTRPDVSVNRFFTLDTKSWAKDSKGWYWKFPDVLTEVGVFGQNAQFHYLYRSGFCVHVQCNASKFHQGALLVAVLPEYVLGTIAGGTGNENSHPPYATTQPGQVGAVLTHPYVLDAGIPLSQLTVCPHQWINLRTNNCATIIVPYMNTVPFDSALNHCNFGLLVVPVVPLDFNAGATSEIPITVTIAPMCAEFAGLRQAVKQGIPTELKPGTNQFLTTDDGVSAPILPGFHPTPPIHIPGEVHNLLEICRVETILEVNNLKTNETTPMQRLCFPVSVQSKTGELCAAFRADPGRDGPWQSTILGQLCRYYTQWSGSLEVTFMFAGSFMATGKMLIAYTPPGGNVPADRITAMLGTHVIWDFGLQSSVTLVVPWISNTHYRAHARAGYFDYYTTGIITIWYQTNYVVPIGAPTTAYIVALAAAQDNFTMKLCKDTEDIEQTANIQGDPIADMIDQTVNNQVNRSLTALQVLPTAADTEASSHRLGTGVVPALQAAETGASSNASDKNLIETRCVLNHHSTQETAIGNFFSRAGLVSIITMPTTGTQNTDGYVNWDIDLMGYAQLRRKCELFTYMRFDAEFTFVVAKPNGELVPQLLQYMYVPPGAPKPTSRDSFAWQTATNPSVFVKMTDPPAQVSVPFMSPASAYQWFYDGYPTFGEHLQANDLDYGQCPNNMMGTFSIRTVGTEKSPHSITLRVYMRIKHVRAWIPRPLRNQPYLFKTNPNYKGNDIKCTSTSRDKITTLGKFGQQSGAIYVGNYRVVNRHLATHNDWANLVWEDSSRDLLVSSTTAQGCDTIARCNCQTGVYYCSSKRKHYPVSFTKPSLIFVEASEYYPARYQSHLMLAVGHSEPGDCGGILRCQHGVVGIVSTGGNGLVGFADVRDLLWLDEEAMEQGVSDYIKGLGDAFGVGFTDAVSREVEALKNHLIGSEGAVEKILKNLVKLISALVIVVRSDYDMVTLTATLALIGCHGSPWAWIKAKTASILGIPIVQKQSASWLKKFNDMANAAKGLEWISSKISKFIDWLKEKIIPAAKEKVEFLNNLKQLPLLENQISNLEQSAASQEDLEAMFGNVSYLAHFCRKFQPLYATEAKRVYALEKRMNNYMQFKSKHRIEPVCLIIRGSPGTGKSLATGIIARAIADKYHSSVYSLPPDPDHFDGYKQQVVTVMDDLCQNPDGKDMSLFCQMVSTVDFIPPMASLEEKGVSFTSKFVIASTNASNIVVPTVSDSDAIRRRFYMDCDIEVTDSYKTDLGRLDAGRAAKLCTENNTANFKRCSPLVCGKAIQLRDRKSKVRYSIDTVVSELIREYNNRSAIGNTIEALFQGPLKFKPIRISLEEKPAPDAISDLLASVDSEEVRQYCREQGWIIPETPTNVERHLNRAVLVMQSIATVVAVVSLVYVIYKLFAGFQGAYSGAPKQALKKPVLRTATVQGPSLDFALSLLRRNIRQVQTDQGHFTMLGVRDRLAILPRHSQPGKTIWVEHKLINVLDAVELVDEQGVNLELTLVTLDTNEKFRDVTKFIPETITGASDATLVINTEHMPSMFVPVGDVVQYGFLNLSGKPTHRTMMYNFPTKAGQCGGVVTSVGKIIGIHIGGNGRQGFCAGLKRGYFASEQGEIQWMKPNKETGRLNINGPTRTKLEPSVFHDVFEGNKEPAVLTSKDPRLEVDFEQALFSKYVGNTLHEPDEYVTQAALHYANQLKQLDININKMSMEEACYGTEYLEAIDLHTSAGYPYSALGVKKRDILDPITRDTTKMKFYMDKYGLDLPYSTYVKDELRSLDKIKKGKSRLIEASSLNDSVYLRMTFGHLYETFHANPGTVTGSAVGCNPDVFWSKLPILLPGSLFAFDYSGYDASLSPVWFRALEVVLREIGYSEEAVSLIEGINHTHHVYRNKTYCVLGGMPSGCSGTSIFNSMINNIIIRTLLIKTFKGIDLDELNMVAYGDDVLASYPFPIDCSELAKTGKEYGLTMTPADKSPCFNEVTWENATFLKRGFLPDHQFPFLIHPTMPMREIHESIRWTKDARNTQDHVRSLCLLAWHNGKEEYEKFVSTIRSVPIGKALAIPNFENLRRNWLELF</sequence>
<dbReference type="EC" id="3.4.22.29" evidence="2"/>
<dbReference type="EC" id="3.6.1.15" evidence="2"/>
<dbReference type="EC" id="3.4.22.28" evidence="10"/>
<dbReference type="EC" id="2.7.7.48" evidence="8"/>
<dbReference type="EMBL" id="AF177911">
    <property type="protein sequence ID" value="AAD55085.1"/>
    <property type="molecule type" value="Genomic_RNA"/>
</dbReference>
<dbReference type="PDB" id="4MG3">
    <property type="method" value="X-ray"/>
    <property type="resolution" value="1.80 A"/>
    <property type="chains" value="A/B=863-1007"/>
</dbReference>
<dbReference type="PDB" id="5C8C">
    <property type="method" value="X-ray"/>
    <property type="resolution" value="2.50 A"/>
    <property type="chains" value="A=566-862, B=1-323, C=324-565"/>
</dbReference>
<dbReference type="PDB" id="6LHT">
    <property type="method" value="EM"/>
    <property type="resolution" value="3.67 A"/>
    <property type="chains" value="A/B/C/D/E=566-862"/>
</dbReference>
<dbReference type="PDB" id="7Y7M">
    <property type="method" value="EM"/>
    <property type="resolution" value="3.05 A"/>
    <property type="chains" value="D=1-69"/>
</dbReference>
<dbReference type="PDB" id="7YMS">
    <property type="method" value="EM"/>
    <property type="resolution" value="2.90 A"/>
    <property type="chains" value="D=1-69"/>
</dbReference>
<dbReference type="PDBsum" id="4MG3"/>
<dbReference type="PDBsum" id="5C8C"/>
<dbReference type="PDBsum" id="6LHT"/>
<dbReference type="PDBsum" id="7Y7M"/>
<dbReference type="PDBsum" id="7YMS"/>
<dbReference type="SMR" id="Q9QF31"/>
<dbReference type="MEROPS" id="C03.020"/>
<dbReference type="ABCD" id="Q9QF31">
    <property type="antibodies" value="3 sequenced antibodies"/>
</dbReference>
<dbReference type="BRENDA" id="3.4.22.29">
    <property type="organism ID" value="12962"/>
</dbReference>
<dbReference type="EvolutionaryTrace" id="Q9QF31"/>
<dbReference type="Proteomes" id="UP000001439">
    <property type="component" value="Genome"/>
</dbReference>
<dbReference type="GO" id="GO:0044162">
    <property type="term" value="C:host cell cytoplasmic vesicle membrane"/>
    <property type="evidence" value="ECO:0007669"/>
    <property type="project" value="UniProtKB-SubCell"/>
</dbReference>
<dbReference type="GO" id="GO:0042025">
    <property type="term" value="C:host cell nucleus"/>
    <property type="evidence" value="ECO:0007669"/>
    <property type="project" value="UniProtKB-SubCell"/>
</dbReference>
<dbReference type="GO" id="GO:0016020">
    <property type="term" value="C:membrane"/>
    <property type="evidence" value="ECO:0007669"/>
    <property type="project" value="UniProtKB-KW"/>
</dbReference>
<dbReference type="GO" id="GO:0039618">
    <property type="term" value="C:T=pseudo3 icosahedral viral capsid"/>
    <property type="evidence" value="ECO:0007669"/>
    <property type="project" value="UniProtKB-KW"/>
</dbReference>
<dbReference type="GO" id="GO:0005524">
    <property type="term" value="F:ATP binding"/>
    <property type="evidence" value="ECO:0007669"/>
    <property type="project" value="UniProtKB-KW"/>
</dbReference>
<dbReference type="GO" id="GO:0016887">
    <property type="term" value="F:ATP hydrolysis activity"/>
    <property type="evidence" value="ECO:0007669"/>
    <property type="project" value="InterPro"/>
</dbReference>
<dbReference type="GO" id="GO:0015267">
    <property type="term" value="F:channel activity"/>
    <property type="evidence" value="ECO:0007669"/>
    <property type="project" value="UniProtKB-KW"/>
</dbReference>
<dbReference type="GO" id="GO:0004197">
    <property type="term" value="F:cysteine-type endopeptidase activity"/>
    <property type="evidence" value="ECO:0007669"/>
    <property type="project" value="UniProtKB-EC"/>
</dbReference>
<dbReference type="GO" id="GO:0003723">
    <property type="term" value="F:RNA binding"/>
    <property type="evidence" value="ECO:0007669"/>
    <property type="project" value="UniProtKB-KW"/>
</dbReference>
<dbReference type="GO" id="GO:0003724">
    <property type="term" value="F:RNA helicase activity"/>
    <property type="evidence" value="ECO:0007669"/>
    <property type="project" value="InterPro"/>
</dbReference>
<dbReference type="GO" id="GO:0003968">
    <property type="term" value="F:RNA-directed RNA polymerase activity"/>
    <property type="evidence" value="ECO:0007669"/>
    <property type="project" value="UniProtKB-KW"/>
</dbReference>
<dbReference type="GO" id="GO:0005198">
    <property type="term" value="F:structural molecule activity"/>
    <property type="evidence" value="ECO:0007669"/>
    <property type="project" value="InterPro"/>
</dbReference>
<dbReference type="GO" id="GO:0008270">
    <property type="term" value="F:zinc ion binding"/>
    <property type="evidence" value="ECO:0007669"/>
    <property type="project" value="UniProtKB-KW"/>
</dbReference>
<dbReference type="GO" id="GO:0006260">
    <property type="term" value="P:DNA replication"/>
    <property type="evidence" value="ECO:0007669"/>
    <property type="project" value="UniProtKB-KW"/>
</dbReference>
<dbReference type="GO" id="GO:0006351">
    <property type="term" value="P:DNA-templated transcription"/>
    <property type="evidence" value="ECO:0007669"/>
    <property type="project" value="InterPro"/>
</dbReference>
<dbReference type="GO" id="GO:0075509">
    <property type="term" value="P:endocytosis involved in viral entry into host cell"/>
    <property type="evidence" value="ECO:0007669"/>
    <property type="project" value="UniProtKB-KW"/>
</dbReference>
<dbReference type="GO" id="GO:0034220">
    <property type="term" value="P:monoatomic ion transmembrane transport"/>
    <property type="evidence" value="ECO:0007669"/>
    <property type="project" value="UniProtKB-KW"/>
</dbReference>
<dbReference type="GO" id="GO:0006508">
    <property type="term" value="P:proteolysis"/>
    <property type="evidence" value="ECO:0007669"/>
    <property type="project" value="UniProtKB-KW"/>
</dbReference>
<dbReference type="GO" id="GO:0044694">
    <property type="term" value="P:symbiont genome entry into host cell via pore formation in plasma membrane"/>
    <property type="evidence" value="ECO:0007669"/>
    <property type="project" value="UniProtKB-KW"/>
</dbReference>
<dbReference type="GO" id="GO:0039520">
    <property type="term" value="P:symbiont-mediated activation of host autophagy"/>
    <property type="evidence" value="ECO:0000250"/>
    <property type="project" value="UniProtKB"/>
</dbReference>
<dbReference type="GO" id="GO:0039554">
    <property type="term" value="P:symbiont-mediated suppression of host cytoplasmic pattern recognition receptor signaling pathway via inhibition of MDA-5 activity"/>
    <property type="evidence" value="ECO:0007669"/>
    <property type="project" value="UniProtKB-KW"/>
</dbReference>
<dbReference type="GO" id="GO:0039522">
    <property type="term" value="P:symbiont-mediated suppression of host mRNA export from nucleus"/>
    <property type="evidence" value="ECO:0007669"/>
    <property type="project" value="UniProtKB-KW"/>
</dbReference>
<dbReference type="GO" id="GO:0085034">
    <property type="term" value="P:symbiont-mediated suppression of host NF-kappaB cascade"/>
    <property type="evidence" value="ECO:0007669"/>
    <property type="project" value="UniProtKB-KW"/>
</dbReference>
<dbReference type="GO" id="GO:0039694">
    <property type="term" value="P:viral RNA genome replication"/>
    <property type="evidence" value="ECO:0007669"/>
    <property type="project" value="InterPro"/>
</dbReference>
<dbReference type="GO" id="GO:0019062">
    <property type="term" value="P:virion attachment to host cell"/>
    <property type="evidence" value="ECO:0007669"/>
    <property type="project" value="UniProtKB-KW"/>
</dbReference>
<dbReference type="CDD" id="cd23213">
    <property type="entry name" value="Enterovirus_RdRp"/>
    <property type="match status" value="1"/>
</dbReference>
<dbReference type="CDD" id="cd00205">
    <property type="entry name" value="rhv_like"/>
    <property type="match status" value="3"/>
</dbReference>
<dbReference type="FunFam" id="1.20.960.20:FF:000001">
    <property type="entry name" value="Genome polyprotein"/>
    <property type="match status" value="1"/>
</dbReference>
<dbReference type="FunFam" id="2.40.10.10:FF:000018">
    <property type="entry name" value="Genome polyprotein"/>
    <property type="match status" value="1"/>
</dbReference>
<dbReference type="FunFam" id="2.40.10.10:FF:000020">
    <property type="entry name" value="Genome polyprotein"/>
    <property type="match status" value="1"/>
</dbReference>
<dbReference type="FunFam" id="2.40.10.10:FF:000022">
    <property type="entry name" value="Genome polyprotein"/>
    <property type="match status" value="1"/>
</dbReference>
<dbReference type="FunFam" id="2.60.120.20:FF:000001">
    <property type="entry name" value="Genome polyprotein"/>
    <property type="match status" value="1"/>
</dbReference>
<dbReference type="FunFam" id="2.60.120.20:FF:000002">
    <property type="entry name" value="Genome polyprotein"/>
    <property type="match status" value="1"/>
</dbReference>
<dbReference type="FunFam" id="2.60.120.20:FF:000003">
    <property type="entry name" value="Genome polyprotein"/>
    <property type="match status" value="1"/>
</dbReference>
<dbReference type="FunFam" id="3.30.70.270:FF:000008">
    <property type="entry name" value="Genome polyprotein"/>
    <property type="match status" value="1"/>
</dbReference>
<dbReference type="FunFam" id="4.10.880.10:FF:000002">
    <property type="entry name" value="Genome polyprotein"/>
    <property type="match status" value="1"/>
</dbReference>
<dbReference type="Gene3D" id="1.20.960.20">
    <property type="match status" value="1"/>
</dbReference>
<dbReference type="Gene3D" id="2.60.120.20">
    <property type="match status" value="3"/>
</dbReference>
<dbReference type="Gene3D" id="3.30.70.270">
    <property type="match status" value="1"/>
</dbReference>
<dbReference type="Gene3D" id="6.10.20.20">
    <property type="entry name" value="Poliovirus 3A protein-like"/>
    <property type="match status" value="1"/>
</dbReference>
<dbReference type="Gene3D" id="4.10.880.10">
    <property type="entry name" value="Poliovirus 3D polymerase Domain 1 (Nucleotidyltransferase)"/>
    <property type="match status" value="2"/>
</dbReference>
<dbReference type="Gene3D" id="2.40.10.10">
    <property type="entry name" value="Trypsin-like serine proteases"/>
    <property type="match status" value="4"/>
</dbReference>
<dbReference type="InterPro" id="IPR003593">
    <property type="entry name" value="AAA+_ATPase"/>
</dbReference>
<dbReference type="InterPro" id="IPR043502">
    <property type="entry name" value="DNA/RNA_pol_sf"/>
</dbReference>
<dbReference type="InterPro" id="IPR000605">
    <property type="entry name" value="Helicase_SF3_ssDNA/RNA_vir"/>
</dbReference>
<dbReference type="InterPro" id="IPR014759">
    <property type="entry name" value="Helicase_SF3_ssRNA_vir"/>
</dbReference>
<dbReference type="InterPro" id="IPR027417">
    <property type="entry name" value="P-loop_NTPase"/>
</dbReference>
<dbReference type="InterPro" id="IPR014838">
    <property type="entry name" value="P3A"/>
</dbReference>
<dbReference type="InterPro" id="IPR036203">
    <property type="entry name" value="P3A_soluble_dom"/>
</dbReference>
<dbReference type="InterPro" id="IPR044067">
    <property type="entry name" value="PCV_3C_PRO"/>
</dbReference>
<dbReference type="InterPro" id="IPR000081">
    <property type="entry name" value="Peptidase_C3"/>
</dbReference>
<dbReference type="InterPro" id="IPR000199">
    <property type="entry name" value="Peptidase_C3A/C3B_picornavir"/>
</dbReference>
<dbReference type="InterPro" id="IPR009003">
    <property type="entry name" value="Peptidase_S1_PA"/>
</dbReference>
<dbReference type="InterPro" id="IPR043504">
    <property type="entry name" value="Peptidase_S1_PA_chymotrypsin"/>
</dbReference>
<dbReference type="InterPro" id="IPR003138">
    <property type="entry name" value="Pico_P1A"/>
</dbReference>
<dbReference type="InterPro" id="IPR002527">
    <property type="entry name" value="Pico_P2B"/>
</dbReference>
<dbReference type="InterPro" id="IPR001676">
    <property type="entry name" value="Picornavirus_capsid"/>
</dbReference>
<dbReference type="InterPro" id="IPR043128">
    <property type="entry name" value="Rev_trsase/Diguanyl_cyclase"/>
</dbReference>
<dbReference type="InterPro" id="IPR033703">
    <property type="entry name" value="Rhv-like"/>
</dbReference>
<dbReference type="InterPro" id="IPR001205">
    <property type="entry name" value="RNA-dir_pol_C"/>
</dbReference>
<dbReference type="InterPro" id="IPR007094">
    <property type="entry name" value="RNA-dir_pol_PSvirus"/>
</dbReference>
<dbReference type="InterPro" id="IPR029053">
    <property type="entry name" value="Viral_coat"/>
</dbReference>
<dbReference type="Pfam" id="PF08727">
    <property type="entry name" value="P3A"/>
    <property type="match status" value="1"/>
</dbReference>
<dbReference type="Pfam" id="PF00548">
    <property type="entry name" value="Peptidase_C3"/>
    <property type="match status" value="1"/>
</dbReference>
<dbReference type="Pfam" id="PF02226">
    <property type="entry name" value="Pico_P1A"/>
    <property type="match status" value="1"/>
</dbReference>
<dbReference type="Pfam" id="PF00947">
    <property type="entry name" value="Pico_P2A"/>
    <property type="match status" value="1"/>
</dbReference>
<dbReference type="Pfam" id="PF01552">
    <property type="entry name" value="Pico_P2B"/>
    <property type="match status" value="1"/>
</dbReference>
<dbReference type="Pfam" id="PF00680">
    <property type="entry name" value="RdRP_1"/>
    <property type="match status" value="1"/>
</dbReference>
<dbReference type="Pfam" id="PF00073">
    <property type="entry name" value="Rhv"/>
    <property type="match status" value="2"/>
</dbReference>
<dbReference type="Pfam" id="PF22663">
    <property type="entry name" value="Rhv_5"/>
    <property type="match status" value="1"/>
</dbReference>
<dbReference type="Pfam" id="PF00910">
    <property type="entry name" value="RNA_helicase"/>
    <property type="match status" value="1"/>
</dbReference>
<dbReference type="SMART" id="SM00382">
    <property type="entry name" value="AAA"/>
    <property type="match status" value="1"/>
</dbReference>
<dbReference type="SUPFAM" id="SSF56672">
    <property type="entry name" value="DNA/RNA polymerases"/>
    <property type="match status" value="1"/>
</dbReference>
<dbReference type="SUPFAM" id="SSF52540">
    <property type="entry name" value="P-loop containing nucleoside triphosphate hydrolases"/>
    <property type="match status" value="1"/>
</dbReference>
<dbReference type="SUPFAM" id="SSF88633">
    <property type="entry name" value="Positive stranded ssRNA viruses"/>
    <property type="match status" value="2"/>
</dbReference>
<dbReference type="SUPFAM" id="SSF89043">
    <property type="entry name" value="Soluble domain of poliovirus core protein 3a"/>
    <property type="match status" value="1"/>
</dbReference>
<dbReference type="SUPFAM" id="SSF50494">
    <property type="entry name" value="Trypsin-like serine proteases"/>
    <property type="match status" value="2"/>
</dbReference>
<dbReference type="PROSITE" id="PS51874">
    <property type="entry name" value="PCV_3C_PRO"/>
    <property type="match status" value="1"/>
</dbReference>
<dbReference type="PROSITE" id="PS50507">
    <property type="entry name" value="RDRP_SSRNA_POS"/>
    <property type="match status" value="1"/>
</dbReference>
<dbReference type="PROSITE" id="PS51218">
    <property type="entry name" value="SF3_HELICASE_2"/>
    <property type="match status" value="1"/>
</dbReference>
<evidence type="ECO:0000250" key="1">
    <source>
        <dbReference type="UniProtKB" id="B9VUU3"/>
    </source>
</evidence>
<evidence type="ECO:0000250" key="2">
    <source>
        <dbReference type="UniProtKB" id="P03300"/>
    </source>
</evidence>
<evidence type="ECO:0000250" key="3">
    <source>
        <dbReference type="UniProtKB" id="P03301"/>
    </source>
</evidence>
<evidence type="ECO:0000250" key="4">
    <source>
        <dbReference type="UniProtKB" id="P03303"/>
    </source>
</evidence>
<evidence type="ECO:0000250" key="5">
    <source>
        <dbReference type="UniProtKB" id="P03313"/>
    </source>
</evidence>
<evidence type="ECO:0000250" key="6">
    <source>
        <dbReference type="UniProtKB" id="Q66478"/>
    </source>
</evidence>
<evidence type="ECO:0000255" key="7"/>
<evidence type="ECO:0000255" key="8">
    <source>
        <dbReference type="PROSITE-ProRule" id="PRU00539"/>
    </source>
</evidence>
<evidence type="ECO:0000255" key="9">
    <source>
        <dbReference type="PROSITE-ProRule" id="PRU00551"/>
    </source>
</evidence>
<evidence type="ECO:0000255" key="10">
    <source>
        <dbReference type="PROSITE-ProRule" id="PRU01222"/>
    </source>
</evidence>
<evidence type="ECO:0000256" key="11">
    <source>
        <dbReference type="SAM" id="MobiDB-lite"/>
    </source>
</evidence>
<evidence type="ECO:0000269" key="12">
    <source>
    </source>
</evidence>
<evidence type="ECO:0000269" key="13">
    <source>
    </source>
</evidence>
<evidence type="ECO:0000269" key="14">
    <source>
    </source>
</evidence>
<evidence type="ECO:0000305" key="15"/>
<evidence type="ECO:0007744" key="16">
    <source>
        <dbReference type="PDB" id="4MG3"/>
    </source>
</evidence>
<evidence type="ECO:0007829" key="17">
    <source>
        <dbReference type="PDB" id="4MG3"/>
    </source>
</evidence>
<evidence type="ECO:0007829" key="18">
    <source>
        <dbReference type="PDB" id="5C8C"/>
    </source>
</evidence>
<evidence type="ECO:0007829" key="19">
    <source>
        <dbReference type="PDB" id="7Y7M"/>
    </source>
</evidence>
<evidence type="ECO:0007829" key="20">
    <source>
        <dbReference type="PDB" id="7YMS"/>
    </source>
</evidence>
<accession>Q9QF31</accession>